<comment type="function">
    <text evidence="2 4">Induces neurotoxic effect on honeybees, including slow movements, disorientation and paralysis (PubMed:29303983). Since it provokes similar symptoms than omega-atracotoxin, it is probable that it acts in the same way by inhibiting voltage-gated calcium channels.</text>
</comment>
<comment type="subcellular location">
    <subcellularLocation>
        <location evidence="2">Secreted</location>
    </subcellularLocation>
</comment>
<comment type="tissue specificity">
    <text evidence="5">Expressed by the venom gland. Is the most highly expressed peptide and is around 3000 times higher expressed in the thoracic glands compared to its body tissues.</text>
</comment>
<comment type="domain">
    <text evidence="5">The presence of a 'disulfide through disulfide knot' structurally defines this protein as a knottin.</text>
</comment>
<comment type="similarity">
    <text evidence="4">Belongs to the asilidin-1 family.</text>
</comment>
<comment type="online information" name="National Center for Biotechnology Information (NCBI)">
    <link uri="https://www.ncbi.nlm.nih.gov/nuccore/GFZQ00000000"/>
</comment>
<comment type="online information" name="National Center for Biotechnology Information (NCBI)">
    <link uri="https://www.ncbi.nlm.nih.gov/nuccore/GFFZ00000000"/>
</comment>
<dbReference type="SMR" id="P0DQI8"/>
<dbReference type="GO" id="GO:0005576">
    <property type="term" value="C:extracellular region"/>
    <property type="evidence" value="ECO:0007669"/>
    <property type="project" value="UniProtKB-SubCell"/>
</dbReference>
<dbReference type="GO" id="GO:0005246">
    <property type="term" value="F:calcium channel regulator activity"/>
    <property type="evidence" value="ECO:0007669"/>
    <property type="project" value="UniProtKB-KW"/>
</dbReference>
<dbReference type="GO" id="GO:0090729">
    <property type="term" value="F:toxin activity"/>
    <property type="evidence" value="ECO:0007669"/>
    <property type="project" value="UniProtKB-KW"/>
</dbReference>
<protein>
    <recommendedName>
        <fullName evidence="3">U-Asilidin(1)-Mar1a</fullName>
    </recommendedName>
</protein>
<feature type="signal peptide" evidence="1">
    <location>
        <begin position="1"/>
        <end position="23"/>
    </location>
</feature>
<feature type="peptide" id="PRO_0000448210" description="U-Asilidin(1)-Mar1a">
    <location>
        <begin position="24"/>
        <end position="51"/>
    </location>
</feature>
<feature type="disulfide bond" evidence="5">
    <location>
        <begin position="26"/>
        <end position="40"/>
    </location>
</feature>
<feature type="disulfide bond" evidence="5">
    <location>
        <begin position="33"/>
        <end position="44"/>
    </location>
</feature>
<feature type="disulfide bond" evidence="5">
    <location>
        <begin position="39"/>
        <end position="49"/>
    </location>
</feature>
<organism>
    <name type="scientific">Machimus arthriticus</name>
    <name type="common">Breck robberfly</name>
    <name type="synonym">Asilus arthriticus</name>
    <dbReference type="NCBI Taxonomy" id="1936065"/>
    <lineage>
        <taxon>Eukaryota</taxon>
        <taxon>Metazoa</taxon>
        <taxon>Ecdysozoa</taxon>
        <taxon>Arthropoda</taxon>
        <taxon>Hexapoda</taxon>
        <taxon>Insecta</taxon>
        <taxon>Pterygota</taxon>
        <taxon>Neoptera</taxon>
        <taxon>Endopterygota</taxon>
        <taxon>Diptera</taxon>
        <taxon>Brachycera</taxon>
        <taxon>Muscomorpha</taxon>
        <taxon>Asiloidea</taxon>
        <taxon>Asilidae</taxon>
        <taxon>Asilinae</taxon>
        <taxon>Machimus</taxon>
    </lineage>
</organism>
<keyword id="KW-0108">Calcium channel impairing toxin</keyword>
<keyword id="KW-1015">Disulfide bond</keyword>
<keyword id="KW-0872">Ion channel impairing toxin</keyword>
<keyword id="KW-0960">Knottin</keyword>
<keyword id="KW-0528">Neurotoxin</keyword>
<keyword id="KW-0964">Secreted</keyword>
<keyword id="KW-0732">Signal</keyword>
<keyword id="KW-0800">Toxin</keyword>
<keyword id="KW-1218">Voltage-gated calcium channel impairing toxin</keyword>
<name>ASI1A_MACAT</name>
<evidence type="ECO:0000255" key="1"/>
<evidence type="ECO:0000269" key="2">
    <source>
    </source>
</evidence>
<evidence type="ECO:0000303" key="3">
    <source>
    </source>
</evidence>
<evidence type="ECO:0000305" key="4"/>
<evidence type="ECO:0000305" key="5">
    <source>
    </source>
</evidence>
<sequence length="51" mass="5519">MANYIEVFSVLAIIFATVLAALAQDCSPEGAQCVRDSECCYNECIDSLCQP</sequence>
<accession>P0DQI8</accession>
<proteinExistence type="evidence at protein level"/>
<reference key="1">
    <citation type="journal article" date="2018" name="Toxins">
        <title>A Dipteran's novel sucker punch: evolution of arthropod atypical venom with a neurotoxic component in robber fliezs (Asilidae, Diptera).</title>
        <authorList>
            <person name="Drukewitz S.H."/>
            <person name="Fuhrmann N."/>
            <person name="Undheim E.A.B."/>
            <person name="Blanke A."/>
            <person name="Giribaldi J."/>
            <person name="Mary R."/>
            <person name="Laconde G."/>
            <person name="Dutertre S."/>
            <person name="von Reumont B.M."/>
        </authorList>
    </citation>
    <scope>NUCLEOTIDE SEQUENCE [MRNA]</scope>
    <scope>SYNTHESIS</scope>
    <scope>IDENTIFICATION BY MASS SPECTROMETRY</scope>
    <scope>SUBCELLULAR LOCATION</scope>
    <source>
        <tissue>Venom</tissue>
        <tissue>Venom gland</tissue>
    </source>
</reference>